<gene>
    <name evidence="1" type="primary">trmD</name>
    <name type="ordered locus">SNSL254_A2888</name>
</gene>
<proteinExistence type="inferred from homology"/>
<sequence length="255" mass="28348">MFIGIVSLFPEMFRAITDYGVTGRAVKKGLLNIQSWSPRDFAHDRHRTVDDRPYGGGPGMLMMVQPLRDAIHAAKAAAGEGAKVIYLSPQGRKLDQAGVSELATNQKLILVCGRYEGVDERVIQTEIDEEWSIGDYVLSGGELPAMTLIDSVARFIPGVLGHEASAIEDSFADGLLDCPHYTRPEVLEGMEVPPVLLSGNHAEIRRWRLKQSLGRTWLRRPELLENLALTEEQARLLAEFKTEHAQQQHKHDGMA</sequence>
<evidence type="ECO:0000255" key="1">
    <source>
        <dbReference type="HAMAP-Rule" id="MF_00605"/>
    </source>
</evidence>
<protein>
    <recommendedName>
        <fullName evidence="1">tRNA (guanine-N(1)-)-methyltransferase</fullName>
        <ecNumber evidence="1">2.1.1.228</ecNumber>
    </recommendedName>
    <alternativeName>
        <fullName evidence="1">M1G-methyltransferase</fullName>
    </alternativeName>
    <alternativeName>
        <fullName evidence="1">tRNA [GM37] methyltransferase</fullName>
    </alternativeName>
</protein>
<organism>
    <name type="scientific">Salmonella newport (strain SL254)</name>
    <dbReference type="NCBI Taxonomy" id="423368"/>
    <lineage>
        <taxon>Bacteria</taxon>
        <taxon>Pseudomonadati</taxon>
        <taxon>Pseudomonadota</taxon>
        <taxon>Gammaproteobacteria</taxon>
        <taxon>Enterobacterales</taxon>
        <taxon>Enterobacteriaceae</taxon>
        <taxon>Salmonella</taxon>
    </lineage>
</organism>
<dbReference type="EC" id="2.1.1.228" evidence="1"/>
<dbReference type="EMBL" id="CP001113">
    <property type="protein sequence ID" value="ACF65158.1"/>
    <property type="molecule type" value="Genomic_DNA"/>
</dbReference>
<dbReference type="RefSeq" id="WP_000469804.1">
    <property type="nucleotide sequence ID" value="NZ_CCMR01000001.1"/>
</dbReference>
<dbReference type="SMR" id="B4T2B3"/>
<dbReference type="KEGG" id="see:SNSL254_A2888"/>
<dbReference type="HOGENOM" id="CLU_047363_0_1_6"/>
<dbReference type="Proteomes" id="UP000008824">
    <property type="component" value="Chromosome"/>
</dbReference>
<dbReference type="GO" id="GO:0005829">
    <property type="term" value="C:cytosol"/>
    <property type="evidence" value="ECO:0007669"/>
    <property type="project" value="TreeGrafter"/>
</dbReference>
<dbReference type="GO" id="GO:0052906">
    <property type="term" value="F:tRNA (guanine(37)-N1)-methyltransferase activity"/>
    <property type="evidence" value="ECO:0007669"/>
    <property type="project" value="UniProtKB-UniRule"/>
</dbReference>
<dbReference type="GO" id="GO:0002939">
    <property type="term" value="P:tRNA N1-guanine methylation"/>
    <property type="evidence" value="ECO:0007669"/>
    <property type="project" value="TreeGrafter"/>
</dbReference>
<dbReference type="CDD" id="cd18080">
    <property type="entry name" value="TrmD-like"/>
    <property type="match status" value="1"/>
</dbReference>
<dbReference type="FunFam" id="1.10.1270.20:FF:000001">
    <property type="entry name" value="tRNA (guanine-N(1)-)-methyltransferase"/>
    <property type="match status" value="1"/>
</dbReference>
<dbReference type="FunFam" id="3.40.1280.10:FF:000001">
    <property type="entry name" value="tRNA (guanine-N(1)-)-methyltransferase"/>
    <property type="match status" value="1"/>
</dbReference>
<dbReference type="Gene3D" id="3.40.1280.10">
    <property type="match status" value="1"/>
</dbReference>
<dbReference type="Gene3D" id="1.10.1270.20">
    <property type="entry name" value="tRNA(m1g37)methyltransferase, domain 2"/>
    <property type="match status" value="1"/>
</dbReference>
<dbReference type="HAMAP" id="MF_00605">
    <property type="entry name" value="TrmD"/>
    <property type="match status" value="1"/>
</dbReference>
<dbReference type="InterPro" id="IPR029028">
    <property type="entry name" value="Alpha/beta_knot_MTases"/>
</dbReference>
<dbReference type="InterPro" id="IPR023148">
    <property type="entry name" value="tRNA_m1G_MeTrfase_C_sf"/>
</dbReference>
<dbReference type="InterPro" id="IPR002649">
    <property type="entry name" value="tRNA_m1G_MeTrfase_TrmD"/>
</dbReference>
<dbReference type="InterPro" id="IPR029026">
    <property type="entry name" value="tRNA_m1G_MTases_N"/>
</dbReference>
<dbReference type="InterPro" id="IPR016009">
    <property type="entry name" value="tRNA_MeTrfase_TRMD/TRM10"/>
</dbReference>
<dbReference type="NCBIfam" id="NF000648">
    <property type="entry name" value="PRK00026.1"/>
    <property type="match status" value="1"/>
</dbReference>
<dbReference type="NCBIfam" id="TIGR00088">
    <property type="entry name" value="trmD"/>
    <property type="match status" value="1"/>
</dbReference>
<dbReference type="PANTHER" id="PTHR46417">
    <property type="entry name" value="TRNA (GUANINE-N(1)-)-METHYLTRANSFERASE"/>
    <property type="match status" value="1"/>
</dbReference>
<dbReference type="PANTHER" id="PTHR46417:SF1">
    <property type="entry name" value="TRNA (GUANINE-N(1)-)-METHYLTRANSFERASE"/>
    <property type="match status" value="1"/>
</dbReference>
<dbReference type="Pfam" id="PF01746">
    <property type="entry name" value="tRNA_m1G_MT"/>
    <property type="match status" value="1"/>
</dbReference>
<dbReference type="PIRSF" id="PIRSF000386">
    <property type="entry name" value="tRNA_mtase"/>
    <property type="match status" value="1"/>
</dbReference>
<dbReference type="SUPFAM" id="SSF75217">
    <property type="entry name" value="alpha/beta knot"/>
    <property type="match status" value="1"/>
</dbReference>
<comment type="function">
    <text evidence="1">Specifically methylates guanosine-37 in various tRNAs.</text>
</comment>
<comment type="catalytic activity">
    <reaction evidence="1">
        <text>guanosine(37) in tRNA + S-adenosyl-L-methionine = N(1)-methylguanosine(37) in tRNA + S-adenosyl-L-homocysteine + H(+)</text>
        <dbReference type="Rhea" id="RHEA:36899"/>
        <dbReference type="Rhea" id="RHEA-COMP:10145"/>
        <dbReference type="Rhea" id="RHEA-COMP:10147"/>
        <dbReference type="ChEBI" id="CHEBI:15378"/>
        <dbReference type="ChEBI" id="CHEBI:57856"/>
        <dbReference type="ChEBI" id="CHEBI:59789"/>
        <dbReference type="ChEBI" id="CHEBI:73542"/>
        <dbReference type="ChEBI" id="CHEBI:74269"/>
        <dbReference type="EC" id="2.1.1.228"/>
    </reaction>
</comment>
<comment type="subunit">
    <text evidence="1">Homodimer.</text>
</comment>
<comment type="subcellular location">
    <subcellularLocation>
        <location evidence="1">Cytoplasm</location>
    </subcellularLocation>
</comment>
<comment type="similarity">
    <text evidence="1">Belongs to the RNA methyltransferase TrmD family.</text>
</comment>
<feature type="chain" id="PRO_1000130205" description="tRNA (guanine-N(1)-)-methyltransferase">
    <location>
        <begin position="1"/>
        <end position="255"/>
    </location>
</feature>
<feature type="binding site" evidence="1">
    <location>
        <position position="113"/>
    </location>
    <ligand>
        <name>S-adenosyl-L-methionine</name>
        <dbReference type="ChEBI" id="CHEBI:59789"/>
    </ligand>
</feature>
<feature type="binding site" evidence="1">
    <location>
        <begin position="133"/>
        <end position="138"/>
    </location>
    <ligand>
        <name>S-adenosyl-L-methionine</name>
        <dbReference type="ChEBI" id="CHEBI:59789"/>
    </ligand>
</feature>
<accession>B4T2B3</accession>
<keyword id="KW-0963">Cytoplasm</keyword>
<keyword id="KW-0489">Methyltransferase</keyword>
<keyword id="KW-0949">S-adenosyl-L-methionine</keyword>
<keyword id="KW-0808">Transferase</keyword>
<keyword id="KW-0819">tRNA processing</keyword>
<name>TRMD_SALNS</name>
<reference key="1">
    <citation type="journal article" date="2011" name="J. Bacteriol.">
        <title>Comparative genomics of 28 Salmonella enterica isolates: evidence for CRISPR-mediated adaptive sublineage evolution.</title>
        <authorList>
            <person name="Fricke W.F."/>
            <person name="Mammel M.K."/>
            <person name="McDermott P.F."/>
            <person name="Tartera C."/>
            <person name="White D.G."/>
            <person name="Leclerc J.E."/>
            <person name="Ravel J."/>
            <person name="Cebula T.A."/>
        </authorList>
    </citation>
    <scope>NUCLEOTIDE SEQUENCE [LARGE SCALE GENOMIC DNA]</scope>
    <source>
        <strain>SL254</strain>
    </source>
</reference>